<comment type="function">
    <text evidence="1">Monooxygenase component of a two-component system involved in the biosynthesis of the side chain of the aminoglycoside antibiotics in the biosynthetic pathway of butirosin. Together with BtrV, mediates hydroxylation of gamma-L-Glu-GABA-S-BtrI. Not able to hydroxylate free substrates, activation by the acyl-carrier protein is mandatory. Octanoyl-S-[BtrI acyl-carrier protein] is also accepted as substrate.</text>
</comment>
<comment type="catalytic activity">
    <reaction evidence="1">
        <text>4-(gamma-L-glutamylamino)butanoyl-[BtrI ACP] + FMNH2 + O2 = 4-(gamma-L-glutamylamino)-(2S)-2-hydroxybutanoyl-[BtrI ACP] + FMN + H2O + H(+)</text>
        <dbReference type="Rhea" id="RHEA:53960"/>
        <dbReference type="Rhea" id="RHEA-COMP:13743"/>
        <dbReference type="Rhea" id="RHEA-COMP:13745"/>
        <dbReference type="ChEBI" id="CHEBI:15377"/>
        <dbReference type="ChEBI" id="CHEBI:15378"/>
        <dbReference type="ChEBI" id="CHEBI:15379"/>
        <dbReference type="ChEBI" id="CHEBI:57618"/>
        <dbReference type="ChEBI" id="CHEBI:58210"/>
        <dbReference type="ChEBI" id="CHEBI:137998"/>
        <dbReference type="ChEBI" id="CHEBI:137999"/>
        <dbReference type="EC" id="1.14.14.13"/>
    </reaction>
</comment>
<comment type="pathway">
    <text evidence="1">Antibiotic biosynthesis; butirosin biosynthesis.</text>
</comment>
<comment type="similarity">
    <text evidence="2">Belongs to the bacterial luciferase oxidoreductase family.</text>
</comment>
<protein>
    <recommendedName>
        <fullName>4-(gamma-L-glutamylamino)butanoyl-[BtrI acyl-carrier protein] monooxygenase BtrO</fullName>
        <ecNumber>1.14.14.13</ecNumber>
    </recommendedName>
    <alternativeName>
        <fullName>Butirosin biosynthesis protein O</fullName>
    </alternativeName>
</protein>
<evidence type="ECO:0000269" key="1">
    <source>
    </source>
</evidence>
<evidence type="ECO:0000305" key="2"/>
<feature type="chain" id="PRO_0000421757" description="4-(gamma-L-glutamylamino)butanoyl-[BtrI acyl-carrier protein] monooxygenase BtrO">
    <location>
        <begin position="1"/>
        <end position="341"/>
    </location>
</feature>
<reference key="1">
    <citation type="journal article" date="2005" name="J. Antibiot.">
        <title>Extended sequence and functional analysis of the butirosin biosynthetic gene cluster in Bacillus circulans SANK 72073.</title>
        <authorList>
            <person name="Kudo F."/>
            <person name="Numakura M."/>
            <person name="Tamegai H."/>
            <person name="Yamamoto H."/>
            <person name="Eguchi T."/>
            <person name="Kakinuma K."/>
        </authorList>
    </citation>
    <scope>NUCLEOTIDE SEQUENCE [GENOMIC DNA]</scope>
    <source>
        <strain>ATCC 21557 / NCIMB 12336 / BU-1709-YQW-B6</strain>
    </source>
</reference>
<reference key="2">
    <citation type="submission" date="2004-06" db="EMBL/GenBank/DDBJ databases">
        <title>Analysis and comparison of the biosynthetic gene clusters for the 2-deoxystreptamine-containing aminoglycoside antibiotics ribostamycin, neomycin, lividomycin, paromomycin and butirosin.</title>
        <authorList>
            <person name="Aboshanab K.M."/>
            <person name="Schmidt-Beissner H."/>
            <person name="Wehmeier U.F."/>
            <person name="Welzel K."/>
            <person name="Vente A."/>
            <person name="Piepersberg W."/>
        </authorList>
    </citation>
    <scope>NUCLEOTIDE SEQUENCE [GENOMIC DNA]</scope>
    <source>
        <strain>ATCC 21557 / NCIMB 12336 / BU-1709-YQW-B6</strain>
    </source>
</reference>
<reference key="3">
    <citation type="journal article" date="2005" name="Chem. Biol.">
        <title>Biosynthesis of the unique amino acid side chain of butirosin: possible protective-group chemistry in an acyl carrier protein-mediated pathway.</title>
        <authorList>
            <person name="Li Y."/>
            <person name="Llewellyn N.M."/>
            <person name="Giri R."/>
            <person name="Huang F."/>
            <person name="Spencer J.B."/>
        </authorList>
    </citation>
    <scope>FUNCTION</scope>
    <scope>CATALYTIC ACTIVITY</scope>
    <scope>PATHWAY</scope>
    <source>
        <strain>ATCC 21557 / NCIMB 12336 / BU-1709-YQW-B6</strain>
    </source>
</reference>
<proteinExistence type="evidence at protein level"/>
<dbReference type="EC" id="1.14.14.13"/>
<dbReference type="EMBL" id="AB097196">
    <property type="protein sequence ID" value="BAE07076.1"/>
    <property type="molecule type" value="Genomic_DNA"/>
</dbReference>
<dbReference type="EMBL" id="AJ781030">
    <property type="protein sequence ID" value="CAG77430.1"/>
    <property type="molecule type" value="Genomic_DNA"/>
</dbReference>
<dbReference type="SMR" id="Q4H4E5"/>
<dbReference type="KEGG" id="ag:BAE07076"/>
<dbReference type="BioCyc" id="MetaCyc:MONOMER-17274"/>
<dbReference type="BRENDA" id="1.14.14.13">
    <property type="organism ID" value="649"/>
</dbReference>
<dbReference type="UniPathway" id="UPA00964"/>
<dbReference type="GO" id="GO:0008726">
    <property type="term" value="F:alkanesulfonate monooxygenase activity"/>
    <property type="evidence" value="ECO:0007669"/>
    <property type="project" value="TreeGrafter"/>
</dbReference>
<dbReference type="GO" id="GO:0016712">
    <property type="term" value="F:oxidoreductase activity, acting on paired donors, with incorporation or reduction of molecular oxygen, reduced flavin or flavoprotein as one donor, and incorporation of one atom of oxygen"/>
    <property type="evidence" value="ECO:0000304"/>
    <property type="project" value="UniProtKB"/>
</dbReference>
<dbReference type="GO" id="GO:0046306">
    <property type="term" value="P:alkanesulfonate catabolic process"/>
    <property type="evidence" value="ECO:0007669"/>
    <property type="project" value="TreeGrafter"/>
</dbReference>
<dbReference type="GO" id="GO:0017000">
    <property type="term" value="P:antibiotic biosynthetic process"/>
    <property type="evidence" value="ECO:0000314"/>
    <property type="project" value="UniProtKB"/>
</dbReference>
<dbReference type="CDD" id="cd01094">
    <property type="entry name" value="Alkanesulfonate_monoxygenase"/>
    <property type="match status" value="1"/>
</dbReference>
<dbReference type="FunFam" id="3.20.20.30:FF:000037">
    <property type="entry name" value="4-(gamma-L-glutamylamino)butanoyl-[BtrI acyl-carrier protein] monooxygenase BtrO"/>
    <property type="match status" value="1"/>
</dbReference>
<dbReference type="Gene3D" id="3.20.20.30">
    <property type="entry name" value="Luciferase-like domain"/>
    <property type="match status" value="1"/>
</dbReference>
<dbReference type="InterPro" id="IPR011251">
    <property type="entry name" value="Luciferase-like_dom"/>
</dbReference>
<dbReference type="InterPro" id="IPR036661">
    <property type="entry name" value="Luciferase-like_sf"/>
</dbReference>
<dbReference type="InterPro" id="IPR050172">
    <property type="entry name" value="SsuD_RutA_monooxygenase"/>
</dbReference>
<dbReference type="PANTHER" id="PTHR42847">
    <property type="entry name" value="ALKANESULFONATE MONOOXYGENASE"/>
    <property type="match status" value="1"/>
</dbReference>
<dbReference type="PANTHER" id="PTHR42847:SF4">
    <property type="entry name" value="ALKANESULFONATE MONOOXYGENASE-RELATED"/>
    <property type="match status" value="1"/>
</dbReference>
<dbReference type="Pfam" id="PF00296">
    <property type="entry name" value="Bac_luciferase"/>
    <property type="match status" value="1"/>
</dbReference>
<dbReference type="SUPFAM" id="SSF51679">
    <property type="entry name" value="Bacterial luciferase-like"/>
    <property type="match status" value="1"/>
</dbReference>
<sequence length="341" mass="38740">MIALDTIQYYGQIPGVNHYNGKKEFMENAVKIAQLSDAYGIVGSLSFFNHSVLDPWAVSSVIMRHTERHVPLIALQPYMYPPYTAAKLIQSFTYLYDRRIDLNMITGAVTGELQQTGGYIDHSSRYKKLHEYVQVLRLLLESDSAVSFKGDYYELNNLEFKPLLPDKRLFPRIFMSGSSEEGLETGLKAADFVVTHPGPLEHFKRHFSEKVQGSAVQSAIRIEIIARESAEQAWKIAHARYPGNRQGKIQLRMKTNSESSWQRMLAELALASETYDEVFWMGGYMNGGIYSPVLVGDYEQVAAYLNEYYKLGVKAVLLGSMYSEEDFIHFSRVKEGISNPV</sequence>
<keyword id="KW-0045">Antibiotic biosynthesis</keyword>
<keyword id="KW-0285">Flavoprotein</keyword>
<keyword id="KW-0288">FMN</keyword>
<keyword id="KW-0503">Monooxygenase</keyword>
<keyword id="KW-0560">Oxidoreductase</keyword>
<gene>
    <name type="primary">btrO</name>
</gene>
<accession>Q4H4E5</accession>
<name>BTRO_NIACI</name>
<organism>
    <name type="scientific">Niallia circulans</name>
    <name type="common">Bacillus circulans</name>
    <dbReference type="NCBI Taxonomy" id="1397"/>
    <lineage>
        <taxon>Bacteria</taxon>
        <taxon>Bacillati</taxon>
        <taxon>Bacillota</taxon>
        <taxon>Bacilli</taxon>
        <taxon>Bacillales</taxon>
        <taxon>Bacillaceae</taxon>
        <taxon>Niallia</taxon>
    </lineage>
</organism>